<keyword id="KW-1003">Cell membrane</keyword>
<keyword id="KW-0472">Membrane</keyword>
<keyword id="KW-0808">Transferase</keyword>
<keyword id="KW-0812">Transmembrane</keyword>
<keyword id="KW-1133">Transmembrane helix</keyword>
<comment type="function">
    <text evidence="1">Catalyzes the transfer of the diacylglyceryl group from phosphatidylglycerol to the sulfhydryl group of the N-terminal cysteine of a prolipoprotein, the first step in the formation of mature lipoproteins.</text>
</comment>
<comment type="catalytic activity">
    <reaction evidence="1">
        <text>L-cysteinyl-[prolipoprotein] + a 1,2-diacyl-sn-glycero-3-phospho-(1'-sn-glycerol) = an S-1,2-diacyl-sn-glyceryl-L-cysteinyl-[prolipoprotein] + sn-glycerol 1-phosphate + H(+)</text>
        <dbReference type="Rhea" id="RHEA:56712"/>
        <dbReference type="Rhea" id="RHEA-COMP:14679"/>
        <dbReference type="Rhea" id="RHEA-COMP:14680"/>
        <dbReference type="ChEBI" id="CHEBI:15378"/>
        <dbReference type="ChEBI" id="CHEBI:29950"/>
        <dbReference type="ChEBI" id="CHEBI:57685"/>
        <dbReference type="ChEBI" id="CHEBI:64716"/>
        <dbReference type="ChEBI" id="CHEBI:140658"/>
        <dbReference type="EC" id="2.5.1.145"/>
    </reaction>
</comment>
<comment type="pathway">
    <text evidence="1">Protein modification; lipoprotein biosynthesis (diacylglyceryl transfer).</text>
</comment>
<comment type="subcellular location">
    <subcellularLocation>
        <location evidence="1">Cell membrane</location>
        <topology evidence="1">Multi-pass membrane protein</topology>
    </subcellularLocation>
</comment>
<comment type="similarity">
    <text evidence="1">Belongs to the Lgt family.</text>
</comment>
<protein>
    <recommendedName>
        <fullName evidence="1">Phosphatidylglycerol--prolipoprotein diacylglyceryl transferase</fullName>
        <ecNumber evidence="1">2.5.1.145</ecNumber>
    </recommendedName>
</protein>
<name>LGT_STRS2</name>
<dbReference type="EC" id="2.5.1.145" evidence="1"/>
<dbReference type="EMBL" id="CP000408">
    <property type="protein sequence ID" value="ABP92773.1"/>
    <property type="molecule type" value="Genomic_DNA"/>
</dbReference>
<dbReference type="SMR" id="A4W334"/>
<dbReference type="KEGG" id="ssv:SSU98_1615"/>
<dbReference type="HOGENOM" id="CLU_013386_0_1_9"/>
<dbReference type="UniPathway" id="UPA00664"/>
<dbReference type="GO" id="GO:0005886">
    <property type="term" value="C:plasma membrane"/>
    <property type="evidence" value="ECO:0007669"/>
    <property type="project" value="UniProtKB-SubCell"/>
</dbReference>
<dbReference type="GO" id="GO:0008961">
    <property type="term" value="F:phosphatidylglycerol-prolipoprotein diacylglyceryl transferase activity"/>
    <property type="evidence" value="ECO:0007669"/>
    <property type="project" value="UniProtKB-UniRule"/>
</dbReference>
<dbReference type="GO" id="GO:0042158">
    <property type="term" value="P:lipoprotein biosynthetic process"/>
    <property type="evidence" value="ECO:0007669"/>
    <property type="project" value="UniProtKB-UniRule"/>
</dbReference>
<dbReference type="HAMAP" id="MF_01147">
    <property type="entry name" value="Lgt"/>
    <property type="match status" value="1"/>
</dbReference>
<dbReference type="InterPro" id="IPR001640">
    <property type="entry name" value="Lgt"/>
</dbReference>
<dbReference type="NCBIfam" id="TIGR00544">
    <property type="entry name" value="lgt"/>
    <property type="match status" value="1"/>
</dbReference>
<dbReference type="PANTHER" id="PTHR30589:SF0">
    <property type="entry name" value="PHOSPHATIDYLGLYCEROL--PROLIPOPROTEIN DIACYLGLYCERYL TRANSFERASE"/>
    <property type="match status" value="1"/>
</dbReference>
<dbReference type="PANTHER" id="PTHR30589">
    <property type="entry name" value="PROLIPOPROTEIN DIACYLGLYCERYL TRANSFERASE"/>
    <property type="match status" value="1"/>
</dbReference>
<dbReference type="Pfam" id="PF01790">
    <property type="entry name" value="LGT"/>
    <property type="match status" value="1"/>
</dbReference>
<dbReference type="PROSITE" id="PS01311">
    <property type="entry name" value="LGT"/>
    <property type="match status" value="1"/>
</dbReference>
<accession>A4W334</accession>
<reference key="1">
    <citation type="journal article" date="2007" name="PLoS ONE">
        <title>A glimpse of streptococcal toxic shock syndrome from comparative genomics of S. suis 2 Chinese isolates.</title>
        <authorList>
            <person name="Chen C."/>
            <person name="Tang J."/>
            <person name="Dong W."/>
            <person name="Wang C."/>
            <person name="Feng Y."/>
            <person name="Wang J."/>
            <person name="Zheng F."/>
            <person name="Pan X."/>
            <person name="Liu D."/>
            <person name="Li M."/>
            <person name="Song Y."/>
            <person name="Zhu X."/>
            <person name="Sun H."/>
            <person name="Feng T."/>
            <person name="Guo Z."/>
            <person name="Ju A."/>
            <person name="Ge J."/>
            <person name="Dong Y."/>
            <person name="Sun W."/>
            <person name="Jiang Y."/>
            <person name="Wang J."/>
            <person name="Yan J."/>
            <person name="Yang H."/>
            <person name="Wang X."/>
            <person name="Gao G.F."/>
            <person name="Yang R."/>
            <person name="Wang J."/>
            <person name="Yu J."/>
        </authorList>
    </citation>
    <scope>NUCLEOTIDE SEQUENCE [LARGE SCALE GENOMIC DNA]</scope>
    <source>
        <strain>98HAH33</strain>
    </source>
</reference>
<sequence>MNTIEKRLNMDPIAIKLGPLEIRWYAICILLGLILGVYLATKEGPRKKIRQDDILDFILIAFPLSILGARIYYVAFSWSEYKDNILSIFAIWNGGIAIYGGLITGAIVLYFFTQYRFINTLDFLDIVAPSVMIAQAIGRWGNFFNQEAYGKAVESLNYLPAFIRDQMYIDGAYRQPTFLFESLWNLLGFGLVCVLRRRPKFLKQGEITAFYLVWYGCGRLLIEGLRTDSLMFLGIRVSQWLSGVLILVGIIMVVLRRRKSSIPFYQP</sequence>
<evidence type="ECO:0000255" key="1">
    <source>
        <dbReference type="HAMAP-Rule" id="MF_01147"/>
    </source>
</evidence>
<proteinExistence type="inferred from homology"/>
<gene>
    <name evidence="1" type="primary">lgt</name>
    <name type="ordered locus">SSU98_1615</name>
</gene>
<feature type="chain" id="PRO_1000065484" description="Phosphatidylglycerol--prolipoprotein diacylglyceryl transferase">
    <location>
        <begin position="1"/>
        <end position="267"/>
    </location>
</feature>
<feature type="transmembrane region" description="Helical" evidence="1">
    <location>
        <begin position="20"/>
        <end position="40"/>
    </location>
</feature>
<feature type="transmembrane region" description="Helical" evidence="1">
    <location>
        <begin position="57"/>
        <end position="77"/>
    </location>
</feature>
<feature type="transmembrane region" description="Helical" evidence="1">
    <location>
        <begin position="88"/>
        <end position="108"/>
    </location>
</feature>
<feature type="transmembrane region" description="Helical" evidence="1">
    <location>
        <begin position="117"/>
        <end position="137"/>
    </location>
</feature>
<feature type="transmembrane region" description="Helical" evidence="1">
    <location>
        <begin position="175"/>
        <end position="195"/>
    </location>
</feature>
<feature type="transmembrane region" description="Helical" evidence="1">
    <location>
        <begin position="205"/>
        <end position="225"/>
    </location>
</feature>
<feature type="transmembrane region" description="Helical" evidence="1">
    <location>
        <begin position="235"/>
        <end position="255"/>
    </location>
</feature>
<feature type="binding site" evidence="1">
    <location>
        <position position="139"/>
    </location>
    <ligand>
        <name>a 1,2-diacyl-sn-glycero-3-phospho-(1'-sn-glycerol)</name>
        <dbReference type="ChEBI" id="CHEBI:64716"/>
    </ligand>
</feature>
<organism>
    <name type="scientific">Streptococcus suis (strain 98HAH33)</name>
    <dbReference type="NCBI Taxonomy" id="391296"/>
    <lineage>
        <taxon>Bacteria</taxon>
        <taxon>Bacillati</taxon>
        <taxon>Bacillota</taxon>
        <taxon>Bacilli</taxon>
        <taxon>Lactobacillales</taxon>
        <taxon>Streptococcaceae</taxon>
        <taxon>Streptococcus</taxon>
    </lineage>
</organism>